<reference key="1">
    <citation type="journal article" date="2011" name="PLoS Genet.">
        <title>Genomic analysis of the necrotrophic fungal pathogens Sclerotinia sclerotiorum and Botrytis cinerea.</title>
        <authorList>
            <person name="Amselem J."/>
            <person name="Cuomo C.A."/>
            <person name="van Kan J.A.L."/>
            <person name="Viaud M."/>
            <person name="Benito E.P."/>
            <person name="Couloux A."/>
            <person name="Coutinho P.M."/>
            <person name="de Vries R.P."/>
            <person name="Dyer P.S."/>
            <person name="Fillinger S."/>
            <person name="Fournier E."/>
            <person name="Gout L."/>
            <person name="Hahn M."/>
            <person name="Kohn L."/>
            <person name="Lapalu N."/>
            <person name="Plummer K.M."/>
            <person name="Pradier J.-M."/>
            <person name="Quevillon E."/>
            <person name="Sharon A."/>
            <person name="Simon A."/>
            <person name="ten Have A."/>
            <person name="Tudzynski B."/>
            <person name="Tudzynski P."/>
            <person name="Wincker P."/>
            <person name="Andrew M."/>
            <person name="Anthouard V."/>
            <person name="Beever R.E."/>
            <person name="Beffa R."/>
            <person name="Benoit I."/>
            <person name="Bouzid O."/>
            <person name="Brault B."/>
            <person name="Chen Z."/>
            <person name="Choquer M."/>
            <person name="Collemare J."/>
            <person name="Cotton P."/>
            <person name="Danchin E.G."/>
            <person name="Da Silva C."/>
            <person name="Gautier A."/>
            <person name="Giraud C."/>
            <person name="Giraud T."/>
            <person name="Gonzalez C."/>
            <person name="Grossetete S."/>
            <person name="Gueldener U."/>
            <person name="Henrissat B."/>
            <person name="Howlett B.J."/>
            <person name="Kodira C."/>
            <person name="Kretschmer M."/>
            <person name="Lappartient A."/>
            <person name="Leroch M."/>
            <person name="Levis C."/>
            <person name="Mauceli E."/>
            <person name="Neuveglise C."/>
            <person name="Oeser B."/>
            <person name="Pearson M."/>
            <person name="Poulain J."/>
            <person name="Poussereau N."/>
            <person name="Quesneville H."/>
            <person name="Rascle C."/>
            <person name="Schumacher J."/>
            <person name="Segurens B."/>
            <person name="Sexton A."/>
            <person name="Silva E."/>
            <person name="Sirven C."/>
            <person name="Soanes D.M."/>
            <person name="Talbot N.J."/>
            <person name="Templeton M."/>
            <person name="Yandava C."/>
            <person name="Yarden O."/>
            <person name="Zeng Q."/>
            <person name="Rollins J.A."/>
            <person name="Lebrun M.-H."/>
            <person name="Dickman M."/>
        </authorList>
    </citation>
    <scope>NUCLEOTIDE SEQUENCE [LARGE SCALE GENOMIC DNA]</scope>
    <source>
        <strain>ATCC 18683 / 1980 / Ss-1</strain>
    </source>
</reference>
<proteinExistence type="inferred from homology"/>
<protein>
    <recommendedName>
        <fullName evidence="1">S-methyl-5'-thioadenosine phosphorylase</fullName>
        <ecNumber evidence="1">2.4.2.28</ecNumber>
    </recommendedName>
    <alternativeName>
        <fullName evidence="1">5'-methylthioadenosine phosphorylase</fullName>
        <shortName evidence="1">MTA phosphorylase</shortName>
        <shortName evidence="1">MTAP</shortName>
        <shortName evidence="1">MTAPase</shortName>
    </alternativeName>
</protein>
<gene>
    <name type="ORF">SS1G_02233</name>
</gene>
<evidence type="ECO:0000255" key="1">
    <source>
        <dbReference type="HAMAP-Rule" id="MF_03155"/>
    </source>
</evidence>
<organism>
    <name type="scientific">Sclerotinia sclerotiorum (strain ATCC 18683 / 1980 / Ss-1)</name>
    <name type="common">White mold</name>
    <name type="synonym">Whetzelinia sclerotiorum</name>
    <dbReference type="NCBI Taxonomy" id="665079"/>
    <lineage>
        <taxon>Eukaryota</taxon>
        <taxon>Fungi</taxon>
        <taxon>Dikarya</taxon>
        <taxon>Ascomycota</taxon>
        <taxon>Pezizomycotina</taxon>
        <taxon>Leotiomycetes</taxon>
        <taxon>Helotiales</taxon>
        <taxon>Sclerotiniaceae</taxon>
        <taxon>Sclerotinia</taxon>
    </lineage>
</organism>
<sequence length="306" mass="33972">MVESLPTTFSDSVHIAVIGGTGLQSLEGFIPIATINPLTPWGYPSAPIHILSHNNTPIAFLSRHGTHHELAPHEIPNRANIAALRSMGVRTIIAFSAVGSLREEIKPRDFVVPDQVIDRTKGVRPFTFFEKGVVGHVGFADPFDERIAKVVRECGHALEGEGIVLHDKGTIICMEGPAFSTRAESHMYRSWGGSVINMSALPEAKLAREAEMVYQMICMATDYDCWHSTADVDVEMVMGHMHANGQNAKRLVGAVLDALNMRWSTIDSIRRRKNKPELANAQQHQIWRGRTYHFAWSISACYFSSE</sequence>
<feature type="chain" id="PRO_0000415135" description="S-methyl-5'-thioadenosine phosphorylase">
    <location>
        <begin position="1"/>
        <end position="306"/>
    </location>
</feature>
<feature type="binding site" evidence="1">
    <location>
        <position position="21"/>
    </location>
    <ligand>
        <name>phosphate</name>
        <dbReference type="ChEBI" id="CHEBI:43474"/>
    </ligand>
</feature>
<feature type="binding site" evidence="1">
    <location>
        <begin position="63"/>
        <end position="64"/>
    </location>
    <ligand>
        <name>phosphate</name>
        <dbReference type="ChEBI" id="CHEBI:43474"/>
    </ligand>
</feature>
<feature type="binding site" evidence="1">
    <location>
        <begin position="96"/>
        <end position="97"/>
    </location>
    <ligand>
        <name>phosphate</name>
        <dbReference type="ChEBI" id="CHEBI:43474"/>
    </ligand>
</feature>
<feature type="binding site" evidence="1">
    <location>
        <position position="198"/>
    </location>
    <ligand>
        <name>substrate</name>
    </ligand>
</feature>
<feature type="binding site" evidence="1">
    <location>
        <position position="199"/>
    </location>
    <ligand>
        <name>phosphate</name>
        <dbReference type="ChEBI" id="CHEBI:43474"/>
    </ligand>
</feature>
<feature type="binding site" evidence="1">
    <location>
        <begin position="222"/>
        <end position="224"/>
    </location>
    <ligand>
        <name>substrate</name>
    </ligand>
</feature>
<feature type="site" description="Important for substrate specificity" evidence="1">
    <location>
        <position position="180"/>
    </location>
</feature>
<feature type="site" description="Important for substrate specificity" evidence="1">
    <location>
        <position position="234"/>
    </location>
</feature>
<keyword id="KW-0963">Cytoplasm</keyword>
<keyword id="KW-0328">Glycosyltransferase</keyword>
<keyword id="KW-0539">Nucleus</keyword>
<keyword id="KW-0660">Purine salvage</keyword>
<keyword id="KW-1185">Reference proteome</keyword>
<keyword id="KW-0808">Transferase</keyword>
<name>MTAP_SCLS1</name>
<accession>A7EAA1</accession>
<comment type="function">
    <text evidence="1">Catalyzes the reversible phosphorylation of S-methyl-5'-thioadenosine (MTA) to adenine and 5-methylthioribose-1-phosphate. Involved in the breakdown of MTA, a major by-product of polyamine biosynthesis. Responsible for the first step in the methionine salvage pathway after MTA has been generated from S-adenosylmethionine. Has broad substrate specificity with 6-aminopurine nucleosides as preferred substrates.</text>
</comment>
<comment type="catalytic activity">
    <reaction evidence="1">
        <text>S-methyl-5'-thioadenosine + phosphate = 5-(methylsulfanyl)-alpha-D-ribose 1-phosphate + adenine</text>
        <dbReference type="Rhea" id="RHEA:11852"/>
        <dbReference type="ChEBI" id="CHEBI:16708"/>
        <dbReference type="ChEBI" id="CHEBI:17509"/>
        <dbReference type="ChEBI" id="CHEBI:43474"/>
        <dbReference type="ChEBI" id="CHEBI:58533"/>
        <dbReference type="EC" id="2.4.2.28"/>
    </reaction>
</comment>
<comment type="pathway">
    <text evidence="1">Amino-acid biosynthesis; L-methionine biosynthesis via salvage pathway; S-methyl-5-thio-alpha-D-ribose 1-phosphate from S-methyl-5'-thioadenosine (phosphorylase route): step 1/1.</text>
</comment>
<comment type="subunit">
    <text evidence="1">Homotrimer.</text>
</comment>
<comment type="subcellular location">
    <subcellularLocation>
        <location evidence="1">Cytoplasm</location>
    </subcellularLocation>
    <subcellularLocation>
        <location evidence="1">Nucleus</location>
    </subcellularLocation>
</comment>
<comment type="similarity">
    <text evidence="1">Belongs to the PNP/MTAP phosphorylase family. MTAP subfamily.</text>
</comment>
<dbReference type="EC" id="2.4.2.28" evidence="1"/>
<dbReference type="EMBL" id="CH476623">
    <property type="protein sequence ID" value="EDN99379.1"/>
    <property type="molecule type" value="Genomic_DNA"/>
</dbReference>
<dbReference type="RefSeq" id="XP_001596017.1">
    <property type="nucleotide sequence ID" value="XM_001595967.1"/>
</dbReference>
<dbReference type="SMR" id="A7EAA1"/>
<dbReference type="FunCoup" id="A7EAA1">
    <property type="interactions" value="388"/>
</dbReference>
<dbReference type="STRING" id="665079.A7EAA1"/>
<dbReference type="EnsemblFungi" id="EDN99379">
    <property type="protein sequence ID" value="EDN99379"/>
    <property type="gene ID" value="SS1G_02233"/>
</dbReference>
<dbReference type="GeneID" id="5492464"/>
<dbReference type="KEGG" id="ssl:SS1G_02233"/>
<dbReference type="eggNOG" id="KOG3985">
    <property type="taxonomic scope" value="Eukaryota"/>
</dbReference>
<dbReference type="HOGENOM" id="CLU_054456_0_1_1"/>
<dbReference type="InParanoid" id="A7EAA1"/>
<dbReference type="OMA" id="ADPFCPE"/>
<dbReference type="UniPathway" id="UPA00904">
    <property type="reaction ID" value="UER00873"/>
</dbReference>
<dbReference type="Proteomes" id="UP000001312">
    <property type="component" value="Unassembled WGS sequence"/>
</dbReference>
<dbReference type="GO" id="GO:0005829">
    <property type="term" value="C:cytosol"/>
    <property type="evidence" value="ECO:0000318"/>
    <property type="project" value="GO_Central"/>
</dbReference>
<dbReference type="GO" id="GO:0005634">
    <property type="term" value="C:nucleus"/>
    <property type="evidence" value="ECO:0007669"/>
    <property type="project" value="UniProtKB-SubCell"/>
</dbReference>
<dbReference type="GO" id="GO:0003729">
    <property type="term" value="F:mRNA binding"/>
    <property type="evidence" value="ECO:0007669"/>
    <property type="project" value="EnsemblFungi"/>
</dbReference>
<dbReference type="GO" id="GO:0017061">
    <property type="term" value="F:S-methyl-5-thioadenosine phosphorylase activity"/>
    <property type="evidence" value="ECO:0000318"/>
    <property type="project" value="GO_Central"/>
</dbReference>
<dbReference type="GO" id="GO:0006537">
    <property type="term" value="P:glutamate biosynthetic process"/>
    <property type="evidence" value="ECO:0007669"/>
    <property type="project" value="EnsemblFungi"/>
</dbReference>
<dbReference type="GO" id="GO:0019509">
    <property type="term" value="P:L-methionine salvage from methylthioadenosine"/>
    <property type="evidence" value="ECO:0000318"/>
    <property type="project" value="GO_Central"/>
</dbReference>
<dbReference type="GO" id="GO:0006166">
    <property type="term" value="P:purine ribonucleoside salvage"/>
    <property type="evidence" value="ECO:0007669"/>
    <property type="project" value="UniProtKB-KW"/>
</dbReference>
<dbReference type="CDD" id="cd09010">
    <property type="entry name" value="MTAP_SsMTAPII_like_MTIP"/>
    <property type="match status" value="1"/>
</dbReference>
<dbReference type="FunFam" id="3.40.50.1580:FF:000008">
    <property type="entry name" value="S-methyl-5'-thioadenosine phosphorylase"/>
    <property type="match status" value="1"/>
</dbReference>
<dbReference type="Gene3D" id="3.40.50.1580">
    <property type="entry name" value="Nucleoside phosphorylase domain"/>
    <property type="match status" value="1"/>
</dbReference>
<dbReference type="HAMAP" id="MF_01963">
    <property type="entry name" value="MTAP"/>
    <property type="match status" value="1"/>
</dbReference>
<dbReference type="InterPro" id="IPR010044">
    <property type="entry name" value="MTAP"/>
</dbReference>
<dbReference type="InterPro" id="IPR000845">
    <property type="entry name" value="Nucleoside_phosphorylase_d"/>
</dbReference>
<dbReference type="InterPro" id="IPR035994">
    <property type="entry name" value="Nucleoside_phosphorylase_sf"/>
</dbReference>
<dbReference type="InterPro" id="IPR018099">
    <property type="entry name" value="Purine_phosphorylase-2_CS"/>
</dbReference>
<dbReference type="NCBIfam" id="TIGR01694">
    <property type="entry name" value="MTAP"/>
    <property type="match status" value="1"/>
</dbReference>
<dbReference type="PANTHER" id="PTHR42679">
    <property type="entry name" value="S-METHYL-5'-THIOADENOSINE PHOSPHORYLASE"/>
    <property type="match status" value="1"/>
</dbReference>
<dbReference type="PANTHER" id="PTHR42679:SF2">
    <property type="entry name" value="S-METHYL-5'-THIOADENOSINE PHOSPHORYLASE"/>
    <property type="match status" value="1"/>
</dbReference>
<dbReference type="Pfam" id="PF01048">
    <property type="entry name" value="PNP_UDP_1"/>
    <property type="match status" value="1"/>
</dbReference>
<dbReference type="SUPFAM" id="SSF53167">
    <property type="entry name" value="Purine and uridine phosphorylases"/>
    <property type="match status" value="1"/>
</dbReference>
<dbReference type="PROSITE" id="PS01240">
    <property type="entry name" value="PNP_MTAP_2"/>
    <property type="match status" value="1"/>
</dbReference>